<gene>
    <name type="primary">YRA2</name>
    <name type="ORF">EC1118_1K5_0067g</name>
</gene>
<protein>
    <recommendedName>
        <fullName>RNA annealing protein YRA2</fullName>
    </recommendedName>
</protein>
<name>YRA2_YEAS8</name>
<proteinExistence type="inferred from homology"/>
<evidence type="ECO:0000250" key="1"/>
<evidence type="ECO:0000250" key="2">
    <source>
        <dbReference type="UniProtKB" id="P36036"/>
    </source>
</evidence>
<evidence type="ECO:0000255" key="3">
    <source>
        <dbReference type="PROSITE-ProRule" id="PRU00176"/>
    </source>
</evidence>
<evidence type="ECO:0000256" key="4">
    <source>
        <dbReference type="SAM" id="MobiDB-lite"/>
    </source>
</evidence>
<evidence type="ECO:0000305" key="5"/>
<comment type="function">
    <text evidence="1">Involved in export of poly(A) mRNAs from the nucleus. Recruited to the coding sequences as well as poly-A sites of active genes (By similarity).</text>
</comment>
<comment type="subunit">
    <text evidence="1">Associates with mRNPs. Interacts with YRA1.</text>
</comment>
<comment type="subcellular location">
    <subcellularLocation>
        <location evidence="1">Nucleus</location>
    </subcellularLocation>
</comment>
<comment type="similarity">
    <text evidence="5">Belongs to the YRA1 family.</text>
</comment>
<organism>
    <name type="scientific">Saccharomyces cerevisiae (strain Lalvin EC1118 / Prise de mousse)</name>
    <name type="common">Baker's yeast</name>
    <dbReference type="NCBI Taxonomy" id="643680"/>
    <lineage>
        <taxon>Eukaryota</taxon>
        <taxon>Fungi</taxon>
        <taxon>Dikarya</taxon>
        <taxon>Ascomycota</taxon>
        <taxon>Saccharomycotina</taxon>
        <taxon>Saccharomycetes</taxon>
        <taxon>Saccharomycetales</taxon>
        <taxon>Saccharomycetaceae</taxon>
        <taxon>Saccharomyces</taxon>
    </lineage>
</organism>
<feature type="chain" id="PRO_0000409546" description="RNA annealing protein YRA2">
    <location>
        <begin position="1"/>
        <end position="203"/>
    </location>
</feature>
<feature type="domain" description="RRM" evidence="3">
    <location>
        <begin position="64"/>
        <end position="138"/>
    </location>
</feature>
<feature type="region of interest" description="Disordered" evidence="4">
    <location>
        <begin position="1"/>
        <end position="60"/>
    </location>
</feature>
<feature type="region of interest" description="Disordered" evidence="4">
    <location>
        <begin position="137"/>
        <end position="203"/>
    </location>
</feature>
<feature type="compositionally biased region" description="Polar residues" evidence="4">
    <location>
        <begin position="11"/>
        <end position="20"/>
    </location>
</feature>
<feature type="compositionally biased region" description="Basic and acidic residues" evidence="4">
    <location>
        <begin position="47"/>
        <end position="60"/>
    </location>
</feature>
<feature type="compositionally biased region" description="Basic residues" evidence="4">
    <location>
        <begin position="139"/>
        <end position="153"/>
    </location>
</feature>
<feature type="compositionally biased region" description="Basic residues" evidence="4">
    <location>
        <begin position="163"/>
        <end position="180"/>
    </location>
</feature>
<feature type="modified residue" description="N-acetylmethionine" evidence="2">
    <location>
        <position position="1"/>
    </location>
</feature>
<accession>C8ZBW6</accession>
<sequence length="203" mass="23823">MDKAFDEIIGNSHTDSSSNHKVTRYRRRDLRNELGPRLGFAPSDAASRSKDRLYREREEPPLPKRIRISKIPLDVSDYTLDDMIKEFGSPIFSKIFDNKEDRTCIYEFEDPEVLEKIVERYNGYELHNAKIEVEIYQPQRKHSRMNAHNRRKQTAQEQGRGRPGSHYRQRPNRVSKKNKGREKNNTPTSVEALDAELDAYMKG</sequence>
<keyword id="KW-0007">Acetylation</keyword>
<keyword id="KW-0238">DNA-binding</keyword>
<keyword id="KW-0509">mRNA transport</keyword>
<keyword id="KW-0539">Nucleus</keyword>
<keyword id="KW-0694">RNA-binding</keyword>
<keyword id="KW-0813">Transport</keyword>
<reference key="1">
    <citation type="journal article" date="2009" name="Proc. Natl. Acad. Sci. U.S.A.">
        <title>Eukaryote-to-eukaryote gene transfer events revealed by the genome sequence of the wine yeast Saccharomyces cerevisiae EC1118.</title>
        <authorList>
            <person name="Novo M."/>
            <person name="Bigey F."/>
            <person name="Beyne E."/>
            <person name="Galeote V."/>
            <person name="Gavory F."/>
            <person name="Mallet S."/>
            <person name="Cambon B."/>
            <person name="Legras J.-L."/>
            <person name="Wincker P."/>
            <person name="Casaregola S."/>
            <person name="Dequin S."/>
        </authorList>
    </citation>
    <scope>NUCLEOTIDE SEQUENCE [LARGE SCALE GENOMIC DNA]</scope>
    <source>
        <strain>Lalvin EC1118 / Prise de mousse</strain>
    </source>
</reference>
<dbReference type="EMBL" id="FN393077">
    <property type="protein sequence ID" value="CAY80882.1"/>
    <property type="molecule type" value="Genomic_DNA"/>
</dbReference>
<dbReference type="SMR" id="C8ZBW6"/>
<dbReference type="HOGENOM" id="CLU_111217_0_0_1"/>
<dbReference type="OrthoDB" id="39322at4893"/>
<dbReference type="Proteomes" id="UP000000286">
    <property type="component" value="Chromosome XI, Scaffold EC1118_1K5"/>
</dbReference>
<dbReference type="GO" id="GO:0005634">
    <property type="term" value="C:nucleus"/>
    <property type="evidence" value="ECO:0007669"/>
    <property type="project" value="UniProtKB-SubCell"/>
</dbReference>
<dbReference type="GO" id="GO:0003677">
    <property type="term" value="F:DNA binding"/>
    <property type="evidence" value="ECO:0007669"/>
    <property type="project" value="UniProtKB-KW"/>
</dbReference>
<dbReference type="GO" id="GO:0003723">
    <property type="term" value="F:RNA binding"/>
    <property type="evidence" value="ECO:0007669"/>
    <property type="project" value="UniProtKB-KW"/>
</dbReference>
<dbReference type="GO" id="GO:0051028">
    <property type="term" value="P:mRNA transport"/>
    <property type="evidence" value="ECO:0007669"/>
    <property type="project" value="UniProtKB-KW"/>
</dbReference>
<dbReference type="CDD" id="cd12295">
    <property type="entry name" value="RRM_YRA2"/>
    <property type="match status" value="1"/>
</dbReference>
<dbReference type="FunFam" id="3.30.70.330:FF:000793">
    <property type="entry name" value="RNA annealing protein YRA2"/>
    <property type="match status" value="1"/>
</dbReference>
<dbReference type="Gene3D" id="3.30.70.330">
    <property type="match status" value="1"/>
</dbReference>
<dbReference type="InterPro" id="IPR025715">
    <property type="entry name" value="FoP_C"/>
</dbReference>
<dbReference type="InterPro" id="IPR012677">
    <property type="entry name" value="Nucleotide-bd_a/b_plait_sf"/>
</dbReference>
<dbReference type="InterPro" id="IPR035979">
    <property type="entry name" value="RBD_domain_sf"/>
</dbReference>
<dbReference type="InterPro" id="IPR000504">
    <property type="entry name" value="RRM_dom"/>
</dbReference>
<dbReference type="InterPro" id="IPR034396">
    <property type="entry name" value="Yra2_RRM"/>
</dbReference>
<dbReference type="Pfam" id="PF13865">
    <property type="entry name" value="FoP_duplication"/>
    <property type="match status" value="1"/>
</dbReference>
<dbReference type="Pfam" id="PF00076">
    <property type="entry name" value="RRM_1"/>
    <property type="match status" value="1"/>
</dbReference>
<dbReference type="SMART" id="SM00360">
    <property type="entry name" value="RRM"/>
    <property type="match status" value="1"/>
</dbReference>
<dbReference type="SUPFAM" id="SSF54928">
    <property type="entry name" value="RNA-binding domain, RBD"/>
    <property type="match status" value="1"/>
</dbReference>
<dbReference type="PROSITE" id="PS50102">
    <property type="entry name" value="RRM"/>
    <property type="match status" value="1"/>
</dbReference>